<dbReference type="EC" id="7.2.2.7" evidence="1"/>
<dbReference type="EMBL" id="AL590842">
    <property type="protein sequence ID" value="CAL21565.1"/>
    <property type="molecule type" value="Genomic_DNA"/>
</dbReference>
<dbReference type="EMBL" id="AE009952">
    <property type="protein sequence ID" value="AAM85095.1"/>
    <property type="molecule type" value="Genomic_DNA"/>
</dbReference>
<dbReference type="EMBL" id="AE017042">
    <property type="protein sequence ID" value="AAS62779.1"/>
    <property type="molecule type" value="Genomic_DNA"/>
</dbReference>
<dbReference type="PIR" id="AB0360">
    <property type="entry name" value="AB0360"/>
</dbReference>
<dbReference type="RefSeq" id="WP_002211598.1">
    <property type="nucleotide sequence ID" value="NZ_WUCM01000029.1"/>
</dbReference>
<dbReference type="RefSeq" id="YP_002347885.1">
    <property type="nucleotide sequence ID" value="NC_003143.1"/>
</dbReference>
<dbReference type="SMR" id="Q8ZCM2"/>
<dbReference type="STRING" id="214092.YPO2960"/>
<dbReference type="PaxDb" id="214092-YPO2960"/>
<dbReference type="DNASU" id="1146471"/>
<dbReference type="EnsemblBacteria" id="AAS62779">
    <property type="protein sequence ID" value="AAS62779"/>
    <property type="gene ID" value="YP_2586"/>
</dbReference>
<dbReference type="KEGG" id="ype:YPO2960"/>
<dbReference type="KEGG" id="ypk:y1524"/>
<dbReference type="KEGG" id="ypm:YP_2586"/>
<dbReference type="PATRIC" id="fig|214092.21.peg.3413"/>
<dbReference type="eggNOG" id="COG3842">
    <property type="taxonomic scope" value="Bacteria"/>
</dbReference>
<dbReference type="HOGENOM" id="CLU_000604_1_1_6"/>
<dbReference type="OMA" id="RINLVIH"/>
<dbReference type="OrthoDB" id="9802264at2"/>
<dbReference type="Proteomes" id="UP000000815">
    <property type="component" value="Chromosome"/>
</dbReference>
<dbReference type="Proteomes" id="UP000001019">
    <property type="component" value="Chromosome"/>
</dbReference>
<dbReference type="Proteomes" id="UP000002490">
    <property type="component" value="Chromosome"/>
</dbReference>
<dbReference type="GO" id="GO:0005886">
    <property type="term" value="C:plasma membrane"/>
    <property type="evidence" value="ECO:0000318"/>
    <property type="project" value="GO_Central"/>
</dbReference>
<dbReference type="GO" id="GO:0015408">
    <property type="term" value="F:ABC-type ferric iron transporter activity"/>
    <property type="evidence" value="ECO:0007669"/>
    <property type="project" value="UniProtKB-EC"/>
</dbReference>
<dbReference type="GO" id="GO:0005524">
    <property type="term" value="F:ATP binding"/>
    <property type="evidence" value="ECO:0007669"/>
    <property type="project" value="UniProtKB-KW"/>
</dbReference>
<dbReference type="GO" id="GO:0016887">
    <property type="term" value="F:ATP hydrolysis activity"/>
    <property type="evidence" value="ECO:0007669"/>
    <property type="project" value="InterPro"/>
</dbReference>
<dbReference type="GO" id="GO:0022857">
    <property type="term" value="F:transmembrane transporter activity"/>
    <property type="evidence" value="ECO:0000318"/>
    <property type="project" value="GO_Central"/>
</dbReference>
<dbReference type="GO" id="GO:0055085">
    <property type="term" value="P:transmembrane transport"/>
    <property type="evidence" value="ECO:0000318"/>
    <property type="project" value="GO_Central"/>
</dbReference>
<dbReference type="CDD" id="cd03259">
    <property type="entry name" value="ABC_Carb_Solutes_like"/>
    <property type="match status" value="1"/>
</dbReference>
<dbReference type="FunFam" id="3.40.50.300:FF:000425">
    <property type="entry name" value="Probable ABC transporter, ATP-binding subunit"/>
    <property type="match status" value="1"/>
</dbReference>
<dbReference type="Gene3D" id="2.40.50.450">
    <property type="match status" value="1"/>
</dbReference>
<dbReference type="Gene3D" id="3.40.50.300">
    <property type="entry name" value="P-loop containing nucleotide triphosphate hydrolases"/>
    <property type="match status" value="1"/>
</dbReference>
<dbReference type="InterPro" id="IPR003593">
    <property type="entry name" value="AAA+_ATPase"/>
</dbReference>
<dbReference type="InterPro" id="IPR050093">
    <property type="entry name" value="ABC_SmlMolc_Importer"/>
</dbReference>
<dbReference type="InterPro" id="IPR003439">
    <property type="entry name" value="ABC_transporter-like_ATP-bd"/>
</dbReference>
<dbReference type="InterPro" id="IPR017871">
    <property type="entry name" value="ABC_transporter-like_CS"/>
</dbReference>
<dbReference type="InterPro" id="IPR015853">
    <property type="entry name" value="ABC_transpr_FbpC"/>
</dbReference>
<dbReference type="InterPro" id="IPR008995">
    <property type="entry name" value="Mo/tungstate-bd_C_term_dom"/>
</dbReference>
<dbReference type="InterPro" id="IPR027417">
    <property type="entry name" value="P-loop_NTPase"/>
</dbReference>
<dbReference type="PANTHER" id="PTHR42781">
    <property type="entry name" value="SPERMIDINE/PUTRESCINE IMPORT ATP-BINDING PROTEIN POTA"/>
    <property type="match status" value="1"/>
</dbReference>
<dbReference type="PANTHER" id="PTHR42781:SF4">
    <property type="entry name" value="SPERMIDINE_PUTRESCINE IMPORT ATP-BINDING PROTEIN POTA"/>
    <property type="match status" value="1"/>
</dbReference>
<dbReference type="Pfam" id="PF00005">
    <property type="entry name" value="ABC_tran"/>
    <property type="match status" value="1"/>
</dbReference>
<dbReference type="SMART" id="SM00382">
    <property type="entry name" value="AAA"/>
    <property type="match status" value="1"/>
</dbReference>
<dbReference type="SUPFAM" id="SSF50331">
    <property type="entry name" value="MOP-like"/>
    <property type="match status" value="1"/>
</dbReference>
<dbReference type="SUPFAM" id="SSF52540">
    <property type="entry name" value="P-loop containing nucleoside triphosphate hydrolases"/>
    <property type="match status" value="1"/>
</dbReference>
<dbReference type="PROSITE" id="PS00211">
    <property type="entry name" value="ABC_TRANSPORTER_1"/>
    <property type="match status" value="1"/>
</dbReference>
<dbReference type="PROSITE" id="PS50893">
    <property type="entry name" value="ABC_TRANSPORTER_2"/>
    <property type="match status" value="1"/>
</dbReference>
<dbReference type="PROSITE" id="PS51242">
    <property type="entry name" value="FBPC"/>
    <property type="match status" value="1"/>
</dbReference>
<keyword id="KW-0067">ATP-binding</keyword>
<keyword id="KW-0997">Cell inner membrane</keyword>
<keyword id="KW-1003">Cell membrane</keyword>
<keyword id="KW-0406">Ion transport</keyword>
<keyword id="KW-0408">Iron</keyword>
<keyword id="KW-0410">Iron transport</keyword>
<keyword id="KW-0472">Membrane</keyword>
<keyword id="KW-0547">Nucleotide-binding</keyword>
<keyword id="KW-1185">Reference proteome</keyword>
<keyword id="KW-1278">Translocase</keyword>
<keyword id="KW-0813">Transport</keyword>
<comment type="function">
    <text evidence="1">Part of the ABC transporter complex FbpABC involved in Fe(3+) ions import. Responsible for energy coupling to the transport system.</text>
</comment>
<comment type="catalytic activity">
    <reaction evidence="1">
        <text>Fe(3+)(out) + ATP + H2O = Fe(3+)(in) + ADP + phosphate + H(+)</text>
        <dbReference type="Rhea" id="RHEA:12332"/>
        <dbReference type="ChEBI" id="CHEBI:15377"/>
        <dbReference type="ChEBI" id="CHEBI:15378"/>
        <dbReference type="ChEBI" id="CHEBI:29034"/>
        <dbReference type="ChEBI" id="CHEBI:30616"/>
        <dbReference type="ChEBI" id="CHEBI:43474"/>
        <dbReference type="ChEBI" id="CHEBI:456216"/>
        <dbReference type="EC" id="7.2.2.7"/>
    </reaction>
</comment>
<comment type="subunit">
    <text evidence="1">The complex is composed of two ATP-binding proteins (FbpC), two transmembrane proteins (FbpB) and a solute-binding protein (FbpA).</text>
</comment>
<comment type="subcellular location">
    <subcellularLocation>
        <location evidence="1">Cell inner membrane</location>
        <topology evidence="1">Peripheral membrane protein</topology>
    </subcellularLocation>
</comment>
<comment type="similarity">
    <text evidence="1">Belongs to the ABC transporter superfamily. Fe(3+) ion importer (TC 3.A.1.10) family.</text>
</comment>
<reference key="1">
    <citation type="journal article" date="2001" name="Nature">
        <title>Genome sequence of Yersinia pestis, the causative agent of plague.</title>
        <authorList>
            <person name="Parkhill J."/>
            <person name="Wren B.W."/>
            <person name="Thomson N.R."/>
            <person name="Titball R.W."/>
            <person name="Holden M.T.G."/>
            <person name="Prentice M.B."/>
            <person name="Sebaihia M."/>
            <person name="James K.D."/>
            <person name="Churcher C.M."/>
            <person name="Mungall K.L."/>
            <person name="Baker S."/>
            <person name="Basham D."/>
            <person name="Bentley S.D."/>
            <person name="Brooks K."/>
            <person name="Cerdeno-Tarraga A.-M."/>
            <person name="Chillingworth T."/>
            <person name="Cronin A."/>
            <person name="Davies R.M."/>
            <person name="Davis P."/>
            <person name="Dougan G."/>
            <person name="Feltwell T."/>
            <person name="Hamlin N."/>
            <person name="Holroyd S."/>
            <person name="Jagels K."/>
            <person name="Karlyshev A.V."/>
            <person name="Leather S."/>
            <person name="Moule S."/>
            <person name="Oyston P.C.F."/>
            <person name="Quail M.A."/>
            <person name="Rutherford K.M."/>
            <person name="Simmonds M."/>
            <person name="Skelton J."/>
            <person name="Stevens K."/>
            <person name="Whitehead S."/>
            <person name="Barrell B.G."/>
        </authorList>
    </citation>
    <scope>NUCLEOTIDE SEQUENCE [LARGE SCALE GENOMIC DNA]</scope>
    <source>
        <strain>CO-92 / Biovar Orientalis</strain>
    </source>
</reference>
<reference key="2">
    <citation type="journal article" date="2002" name="J. Bacteriol.">
        <title>Genome sequence of Yersinia pestis KIM.</title>
        <authorList>
            <person name="Deng W."/>
            <person name="Burland V."/>
            <person name="Plunkett G. III"/>
            <person name="Boutin A."/>
            <person name="Mayhew G.F."/>
            <person name="Liss P."/>
            <person name="Perna N.T."/>
            <person name="Rose D.J."/>
            <person name="Mau B."/>
            <person name="Zhou S."/>
            <person name="Schwartz D.C."/>
            <person name="Fetherston J.D."/>
            <person name="Lindler L.E."/>
            <person name="Brubaker R.R."/>
            <person name="Plano G.V."/>
            <person name="Straley S.C."/>
            <person name="McDonough K.A."/>
            <person name="Nilles M.L."/>
            <person name="Matson J.S."/>
            <person name="Blattner F.R."/>
            <person name="Perry R.D."/>
        </authorList>
    </citation>
    <scope>NUCLEOTIDE SEQUENCE [LARGE SCALE GENOMIC DNA]</scope>
    <source>
        <strain>KIM10+ / Biovar Mediaevalis</strain>
    </source>
</reference>
<reference key="3">
    <citation type="journal article" date="2004" name="DNA Res.">
        <title>Complete genome sequence of Yersinia pestis strain 91001, an isolate avirulent to humans.</title>
        <authorList>
            <person name="Song Y."/>
            <person name="Tong Z."/>
            <person name="Wang J."/>
            <person name="Wang L."/>
            <person name="Guo Z."/>
            <person name="Han Y."/>
            <person name="Zhang J."/>
            <person name="Pei D."/>
            <person name="Zhou D."/>
            <person name="Qin H."/>
            <person name="Pang X."/>
            <person name="Han Y."/>
            <person name="Zhai J."/>
            <person name="Li M."/>
            <person name="Cui B."/>
            <person name="Qi Z."/>
            <person name="Jin L."/>
            <person name="Dai R."/>
            <person name="Chen F."/>
            <person name="Li S."/>
            <person name="Ye C."/>
            <person name="Du Z."/>
            <person name="Lin W."/>
            <person name="Wang J."/>
            <person name="Yu J."/>
            <person name="Yang H."/>
            <person name="Wang J."/>
            <person name="Huang P."/>
            <person name="Yang R."/>
        </authorList>
    </citation>
    <scope>NUCLEOTIDE SEQUENCE [LARGE SCALE GENOMIC DNA]</scope>
    <source>
        <strain>91001 / Biovar Mediaevalis</strain>
    </source>
</reference>
<name>FBPC_YERPE</name>
<organism>
    <name type="scientific">Yersinia pestis</name>
    <dbReference type="NCBI Taxonomy" id="632"/>
    <lineage>
        <taxon>Bacteria</taxon>
        <taxon>Pseudomonadati</taxon>
        <taxon>Pseudomonadota</taxon>
        <taxon>Gammaproteobacteria</taxon>
        <taxon>Enterobacterales</taxon>
        <taxon>Yersiniaceae</taxon>
        <taxon>Yersinia</taxon>
    </lineage>
</organism>
<accession>Q8ZCM2</accession>
<accession>Q0WCV3</accession>
<accession>Q74SL4</accession>
<accession>Q7CJE0</accession>
<gene>
    <name evidence="1" type="primary">fbpC</name>
    <name type="ordered locus">YPO2960</name>
    <name type="ordered locus">y1524</name>
    <name type="ordered locus">YP_2586</name>
</gene>
<protein>
    <recommendedName>
        <fullName evidence="1">Fe(3+) ions import ATP-binding protein FbpC</fullName>
        <ecNumber evidence="1">7.2.2.7</ecNumber>
    </recommendedName>
</protein>
<evidence type="ECO:0000255" key="1">
    <source>
        <dbReference type="HAMAP-Rule" id="MF_01706"/>
    </source>
</evidence>
<sequence>MSTLELHHIGKSYQSVMVLDRIDLHVPPGSRTAIVGPSGSGKTTLLRIIAGFETPDAGKVILQGKAMFDGTTYVPAHKRGIGFVPQDGALFPHFTVAGNIGYGLKGSQRDKERRINELMDMVALDRRLSALWPHEISGGQQQRVALARALAQRPVLMLLDEPFSALDTALRASTRKAVAELLSEANIASILVTHDQTEALSFADQVAVMRAGKLAHVGPPQELYLRPVDEPTATFLGETLMLTAQLGTGLAHCALGQVKVDNPHRRGEARIMLRPEQITLTPLRPEQYNAASCLAKVIAIDFAGFISTLTLQIISSGETIEIKTISREDLHVGLTVGLDIMGQAHIFAE</sequence>
<proteinExistence type="inferred from homology"/>
<feature type="chain" id="PRO_0000092369" description="Fe(3+) ions import ATP-binding protein FbpC">
    <location>
        <begin position="1"/>
        <end position="349"/>
    </location>
</feature>
<feature type="domain" description="ABC transporter" evidence="1">
    <location>
        <begin position="4"/>
        <end position="236"/>
    </location>
</feature>
<feature type="binding site" evidence="1">
    <location>
        <begin position="36"/>
        <end position="43"/>
    </location>
    <ligand>
        <name>ATP</name>
        <dbReference type="ChEBI" id="CHEBI:30616"/>
    </ligand>
</feature>